<reference key="1">
    <citation type="journal article" date="2012" name="MBio">
        <title>Comparative genome analysis of Trichophyton rubrum and related dermatophytes reveals candidate genes involved in infection.</title>
        <authorList>
            <person name="Martinez D.A."/>
            <person name="Oliver B.G."/>
            <person name="Graeser Y."/>
            <person name="Goldberg J.M."/>
            <person name="Li W."/>
            <person name="Martinez-Rossi N.M."/>
            <person name="Monod M."/>
            <person name="Shelest E."/>
            <person name="Barton R.C."/>
            <person name="Birch E."/>
            <person name="Brakhage A.A."/>
            <person name="Chen Z."/>
            <person name="Gurr S.J."/>
            <person name="Heiman D."/>
            <person name="Heitman J."/>
            <person name="Kosti I."/>
            <person name="Rossi A."/>
            <person name="Saif S."/>
            <person name="Samalova M."/>
            <person name="Saunders C.W."/>
            <person name="Shea T."/>
            <person name="Summerbell R.C."/>
            <person name="Xu J."/>
            <person name="Young S."/>
            <person name="Zeng Q."/>
            <person name="Birren B.W."/>
            <person name="Cuomo C.A."/>
            <person name="White T.C."/>
        </authorList>
    </citation>
    <scope>NUCLEOTIDE SEQUENCE [LARGE SCALE GENOMIC DNA]</scope>
    <source>
        <strain>ATCC MYA-4606 / CBS 127.97</strain>
    </source>
</reference>
<reference key="2">
    <citation type="journal article" date="2013" name="ACS Synth. Biol.">
        <title>Discovery of cryptic polyketide metabolites from dermatophytes using heterologous expression in Aspergillus nidulans.</title>
        <authorList>
            <person name="Yin W.B."/>
            <person name="Chooi Y.H."/>
            <person name="Smith A.R."/>
            <person name="Cacho R.A."/>
            <person name="Hu Y."/>
            <person name="White T.C."/>
            <person name="Tang Y."/>
        </authorList>
    </citation>
    <scope>FUNCTION</scope>
</reference>
<sequence>MDQSSSGGSMGGRLPFNQSFWEEFLMGREGHLPALPEISHVSKSVVRILGGNPGSMHLQGTNTYLVGTGRSRILIDTAQGLPVWISRISSFLYTQKIELSYVLLTHWHGDHTGGVPDLISQNSSLSNRIYKNRPDSGQNPITHGQIFSVAGATVRAILTPGHSVDHMCFLLEEENALFTGDNVLGHGFSVAQDLGRYMDSLRDMASLGCRIGYPAHGAVIEKLPGKLEEYIQHREGRERMMLSALTRQRVQGEGVREGGVKCGLTLNEIVMVIYGRLPQEVIEKALAPSLLQVLWKLTEDRMVGFKPGDPLKRQWFALEQKKRNKVRGCPS</sequence>
<dbReference type="EC" id="3.1.-.-" evidence="7"/>
<dbReference type="EMBL" id="DS995747">
    <property type="protein sequence ID" value="EGE06346.1"/>
    <property type="molecule type" value="Genomic_DNA"/>
</dbReference>
<dbReference type="SMR" id="F2PWS8"/>
<dbReference type="VEuPathDB" id="FungiDB:TEQG_05349"/>
<dbReference type="eggNOG" id="KOG0813">
    <property type="taxonomic scope" value="Eukaryota"/>
</dbReference>
<dbReference type="HOGENOM" id="CLU_048478_1_0_1"/>
<dbReference type="OrthoDB" id="3433at34384"/>
<dbReference type="Proteomes" id="UP000009169">
    <property type="component" value="Unassembled WGS sequence"/>
</dbReference>
<dbReference type="GO" id="GO:0008800">
    <property type="term" value="F:beta-lactamase activity"/>
    <property type="evidence" value="ECO:0007669"/>
    <property type="project" value="InterPro"/>
</dbReference>
<dbReference type="GO" id="GO:0008270">
    <property type="term" value="F:zinc ion binding"/>
    <property type="evidence" value="ECO:0007669"/>
    <property type="project" value="InterPro"/>
</dbReference>
<dbReference type="GO" id="GO:0017001">
    <property type="term" value="P:antibiotic catabolic process"/>
    <property type="evidence" value="ECO:0007669"/>
    <property type="project" value="InterPro"/>
</dbReference>
<dbReference type="GO" id="GO:0044550">
    <property type="term" value="P:secondary metabolite biosynthetic process"/>
    <property type="evidence" value="ECO:0007669"/>
    <property type="project" value="TreeGrafter"/>
</dbReference>
<dbReference type="CDD" id="cd07722">
    <property type="entry name" value="LACTB2-like_MBL-fold"/>
    <property type="match status" value="1"/>
</dbReference>
<dbReference type="FunFam" id="3.60.15.10:FF:000041">
    <property type="entry name" value="Metallo-beta-lactamase domain protein"/>
    <property type="match status" value="1"/>
</dbReference>
<dbReference type="Gene3D" id="3.60.15.10">
    <property type="entry name" value="Ribonuclease Z/Hydroxyacylglutathione hydrolase-like"/>
    <property type="match status" value="1"/>
</dbReference>
<dbReference type="Gene3D" id="1.10.10.10">
    <property type="entry name" value="Winged helix-like DNA-binding domain superfamily/Winged helix DNA-binding domain"/>
    <property type="match status" value="1"/>
</dbReference>
<dbReference type="InterPro" id="IPR001018">
    <property type="entry name" value="Beta-lactamase_class-B_CS"/>
</dbReference>
<dbReference type="InterPro" id="IPR047921">
    <property type="entry name" value="LACTB2-like_MBL-fold"/>
</dbReference>
<dbReference type="InterPro" id="IPR001279">
    <property type="entry name" value="Metallo-B-lactamas"/>
</dbReference>
<dbReference type="InterPro" id="IPR036866">
    <property type="entry name" value="RibonucZ/Hydroxyglut_hydro"/>
</dbReference>
<dbReference type="InterPro" id="IPR050662">
    <property type="entry name" value="Sec-metab_biosynth-thioest"/>
</dbReference>
<dbReference type="InterPro" id="IPR036388">
    <property type="entry name" value="WH-like_DNA-bd_sf"/>
</dbReference>
<dbReference type="PANTHER" id="PTHR23131">
    <property type="entry name" value="ENDORIBONUCLEASE LACTB2"/>
    <property type="match status" value="1"/>
</dbReference>
<dbReference type="PANTHER" id="PTHR23131:SF2">
    <property type="entry name" value="LACTAMASE-LIKE PROTEIN APTB-RELATED"/>
    <property type="match status" value="1"/>
</dbReference>
<dbReference type="Pfam" id="PF00753">
    <property type="entry name" value="Lactamase_B"/>
    <property type="match status" value="2"/>
</dbReference>
<dbReference type="SMART" id="SM00849">
    <property type="entry name" value="Lactamase_B"/>
    <property type="match status" value="1"/>
</dbReference>
<dbReference type="SUPFAM" id="SSF56281">
    <property type="entry name" value="Metallo-hydrolase/oxidoreductase"/>
    <property type="match status" value="1"/>
</dbReference>
<dbReference type="PROSITE" id="PS00743">
    <property type="entry name" value="BETA_LACTAMASE_B_1"/>
    <property type="match status" value="1"/>
</dbReference>
<organism>
    <name type="scientific">Trichophyton equinum (strain ATCC MYA-4606 / CBS 127.97)</name>
    <name type="common">Horse ringworm fungus</name>
    <dbReference type="NCBI Taxonomy" id="559882"/>
    <lineage>
        <taxon>Eukaryota</taxon>
        <taxon>Fungi</taxon>
        <taxon>Dikarya</taxon>
        <taxon>Ascomycota</taxon>
        <taxon>Pezizomycotina</taxon>
        <taxon>Eurotiomycetes</taxon>
        <taxon>Eurotiomycetidae</taxon>
        <taxon>Onygenales</taxon>
        <taxon>Arthrodermataceae</taxon>
        <taxon>Trichophyton</taxon>
    </lineage>
</organism>
<keyword id="KW-0378">Hydrolase</keyword>
<keyword id="KW-0479">Metal-binding</keyword>
<keyword id="KW-0862">Zinc</keyword>
<comment type="function">
    <text evidence="1 2 7">Lactamase-like protein; part of the gene cluster that mediates the biosynthesis of neosartoricin B, a prenylated anthracenone that probably exhibits T-cell antiproliferative activity, suggestive of a physiological role as an immunosuppressive agent (PubMed:23758576). The non-reducing polyketide synthase nscA probably synthesizes and cyclizes the decaketide backbone (By similarity). The hydrolase nscB then mediates the product release through hydrolysis followed by spontaneous decarboxylation (By similarity). The prenyltransferase nscD catalyzes the addition of the dimethylallyl group to the aromatic C5 (By similarity). The FAD-dependent monooxygenase nscC is then responsible for the stereospecific hydroxylation at C2 (By similarity). Neosartoricin B can be converted into two additional compounds neosartoricins C and D (By similarity). Neosartoricin C is a spirocyclic compound that is cyclized through the attack of C3 hydroxyl on C14, followed by dehydration (By similarity). On the other hand, neosartoricin D is a further cyclized compound in which attack of C2 on C14 in neosartoricin C results in the formation of the acetal-containing dioxabicyclo-octanone ring (By similarity). Both of these compounds are novel and possibly represent related metabolites of the gene cluster (By similarity).</text>
</comment>
<comment type="cofactor">
    <cofactor evidence="3">
        <name>Zn(2+)</name>
        <dbReference type="ChEBI" id="CHEBI:29105"/>
    </cofactor>
    <text evidence="3">Binds 2 Zn(2+) ions per subunit.</text>
</comment>
<comment type="pathway">
    <text evidence="7">Secondary metabolite biosynthesis.</text>
</comment>
<comment type="similarity">
    <text evidence="6">Belongs to the metallo-beta-lactamase superfamily.</text>
</comment>
<evidence type="ECO:0000250" key="1">
    <source>
        <dbReference type="UniProtKB" id="A1D8J2"/>
    </source>
</evidence>
<evidence type="ECO:0000250" key="2">
    <source>
        <dbReference type="UniProtKB" id="F2S702"/>
    </source>
</evidence>
<evidence type="ECO:0000250" key="3">
    <source>
        <dbReference type="UniProtKB" id="Q988B9"/>
    </source>
</evidence>
<evidence type="ECO:0000255" key="4"/>
<evidence type="ECO:0000303" key="5">
    <source>
    </source>
</evidence>
<evidence type="ECO:0000305" key="6"/>
<evidence type="ECO:0000305" key="7">
    <source>
    </source>
</evidence>
<gene>
    <name evidence="5" type="primary">nscB</name>
    <name type="ORF">TEQG_05349</name>
</gene>
<proteinExistence type="inferred from homology"/>
<feature type="chain" id="PRO_0000437900" description="Lactamase-like protein nscB">
    <location>
        <begin position="1"/>
        <end position="331"/>
    </location>
</feature>
<feature type="active site" description="Proton donor/acceptor" evidence="4">
    <location>
        <position position="110"/>
    </location>
</feature>
<feature type="binding site" evidence="3">
    <location>
        <position position="106"/>
    </location>
    <ligand>
        <name>Zn(2+)</name>
        <dbReference type="ChEBI" id="CHEBI:29105"/>
        <label>1</label>
        <note>catalytic</note>
    </ligand>
</feature>
<feature type="binding site" evidence="3">
    <location>
        <position position="108"/>
    </location>
    <ligand>
        <name>Zn(2+)</name>
        <dbReference type="ChEBI" id="CHEBI:29105"/>
        <label>1</label>
        <note>catalytic</note>
    </ligand>
</feature>
<feature type="binding site" evidence="3">
    <location>
        <position position="110"/>
    </location>
    <ligand>
        <name>Zn(2+)</name>
        <dbReference type="ChEBI" id="CHEBI:29105"/>
        <label>2</label>
        <note>catalytic</note>
    </ligand>
</feature>
<feature type="binding site" evidence="3">
    <location>
        <position position="111"/>
    </location>
    <ligand>
        <name>Zn(2+)</name>
        <dbReference type="ChEBI" id="CHEBI:29105"/>
        <label>2</label>
        <note>catalytic</note>
    </ligand>
</feature>
<accession>F2PWS8</accession>
<name>NSCB_TRIEC</name>
<protein>
    <recommendedName>
        <fullName evidence="5">Lactamase-like protein nscB</fullName>
        <ecNumber evidence="7">3.1.-.-</ecNumber>
    </recommendedName>
    <alternativeName>
        <fullName evidence="5">Neosartoricin B biosynthesis protein B</fullName>
    </alternativeName>
</protein>